<feature type="chain" id="PRO_0000208865" description="Lysozyme C">
    <location>
        <begin position="1"/>
        <end position="129"/>
    </location>
</feature>
<feature type="domain" description="C-type lysozyme" evidence="1">
    <location>
        <begin position="1"/>
        <end position="129"/>
    </location>
</feature>
<feature type="active site" evidence="1">
    <location>
        <position position="35"/>
    </location>
</feature>
<feature type="active site" evidence="1">
    <location>
        <position position="52"/>
    </location>
</feature>
<feature type="disulfide bond" evidence="1">
    <location>
        <begin position="6"/>
        <end position="127"/>
    </location>
</feature>
<feature type="disulfide bond" evidence="1">
    <location>
        <begin position="30"/>
        <end position="115"/>
    </location>
</feature>
<feature type="disulfide bond" evidence="1">
    <location>
        <begin position="64"/>
        <end position="80"/>
    </location>
</feature>
<feature type="disulfide bond" evidence="1">
    <location>
        <begin position="76"/>
        <end position="94"/>
    </location>
</feature>
<dbReference type="EC" id="3.2.1.17"/>
<dbReference type="PIR" id="A00854">
    <property type="entry name" value="LZQJEC"/>
</dbReference>
<dbReference type="BMRB" id="P00699"/>
<dbReference type="SMR" id="P00699"/>
<dbReference type="CAZy" id="GH22">
    <property type="family name" value="Glycoside Hydrolase Family 22"/>
</dbReference>
<dbReference type="GO" id="GO:0005576">
    <property type="term" value="C:extracellular region"/>
    <property type="evidence" value="ECO:0007669"/>
    <property type="project" value="UniProtKB-SubCell"/>
</dbReference>
<dbReference type="GO" id="GO:0003796">
    <property type="term" value="F:lysozyme activity"/>
    <property type="evidence" value="ECO:0007669"/>
    <property type="project" value="UniProtKB-EC"/>
</dbReference>
<dbReference type="GO" id="GO:0050829">
    <property type="term" value="P:defense response to Gram-negative bacterium"/>
    <property type="evidence" value="ECO:0007669"/>
    <property type="project" value="TreeGrafter"/>
</dbReference>
<dbReference type="GO" id="GO:0050830">
    <property type="term" value="P:defense response to Gram-positive bacterium"/>
    <property type="evidence" value="ECO:0007669"/>
    <property type="project" value="TreeGrafter"/>
</dbReference>
<dbReference type="GO" id="GO:0031640">
    <property type="term" value="P:killing of cells of another organism"/>
    <property type="evidence" value="ECO:0007669"/>
    <property type="project" value="UniProtKB-KW"/>
</dbReference>
<dbReference type="CDD" id="cd16897">
    <property type="entry name" value="LYZ_C"/>
    <property type="match status" value="1"/>
</dbReference>
<dbReference type="FunFam" id="1.10.530.10:FF:000001">
    <property type="entry name" value="Lysozyme C"/>
    <property type="match status" value="1"/>
</dbReference>
<dbReference type="Gene3D" id="1.10.530.10">
    <property type="match status" value="1"/>
</dbReference>
<dbReference type="InterPro" id="IPR001916">
    <property type="entry name" value="Glyco_hydro_22"/>
</dbReference>
<dbReference type="InterPro" id="IPR019799">
    <property type="entry name" value="Glyco_hydro_22_CS"/>
</dbReference>
<dbReference type="InterPro" id="IPR000974">
    <property type="entry name" value="Glyco_hydro_22_lys"/>
</dbReference>
<dbReference type="InterPro" id="IPR023346">
    <property type="entry name" value="Lysozyme-like_dom_sf"/>
</dbReference>
<dbReference type="PANTHER" id="PTHR11407">
    <property type="entry name" value="LYSOZYME C"/>
    <property type="match status" value="1"/>
</dbReference>
<dbReference type="PANTHER" id="PTHR11407:SF28">
    <property type="entry name" value="LYSOZYME C"/>
    <property type="match status" value="1"/>
</dbReference>
<dbReference type="Pfam" id="PF00062">
    <property type="entry name" value="Lys"/>
    <property type="match status" value="1"/>
</dbReference>
<dbReference type="PRINTS" id="PR00137">
    <property type="entry name" value="LYSOZYME"/>
</dbReference>
<dbReference type="PRINTS" id="PR00135">
    <property type="entry name" value="LYZLACT"/>
</dbReference>
<dbReference type="SMART" id="SM00263">
    <property type="entry name" value="LYZ1"/>
    <property type="match status" value="1"/>
</dbReference>
<dbReference type="SUPFAM" id="SSF53955">
    <property type="entry name" value="Lysozyme-like"/>
    <property type="match status" value="1"/>
</dbReference>
<dbReference type="PROSITE" id="PS00128">
    <property type="entry name" value="GLYCOSYL_HYDROL_F22_1"/>
    <property type="match status" value="1"/>
</dbReference>
<dbReference type="PROSITE" id="PS51348">
    <property type="entry name" value="GLYCOSYL_HYDROL_F22_2"/>
    <property type="match status" value="1"/>
</dbReference>
<comment type="function">
    <text>Lysozymes have primarily a bacteriolytic function; those in tissues and body fluids are associated with the monocyte-macrophage system and enhance the activity of immunoagents.</text>
</comment>
<comment type="catalytic activity">
    <reaction>
        <text>Hydrolysis of (1-&gt;4)-beta-linkages between N-acetylmuramic acid and N-acetyl-D-glucosamine residues in a peptidoglycan and between N-acetyl-D-glucosamine residues in chitodextrins.</text>
        <dbReference type="EC" id="3.2.1.17"/>
    </reaction>
</comment>
<comment type="subunit">
    <text>Monomer.</text>
</comment>
<comment type="subcellular location">
    <subcellularLocation>
        <location>Secreted</location>
    </subcellularLocation>
</comment>
<comment type="miscellaneous">
    <text>Lysozyme C is capable of both hydrolysis and transglycosylation; it also shows a slight esterase activity. It acts rapidly on both peptide-substituted and unsubstituted peptidoglycan, and slowly on chitin oligosaccharides.</text>
</comment>
<comment type="similarity">
    <text evidence="1">Belongs to the glycosyl hydrolase 22 family.</text>
</comment>
<organism>
    <name type="scientific">Callipepla californica</name>
    <name type="common">California quail</name>
    <name type="synonym">Lophortyx californica</name>
    <dbReference type="NCBI Taxonomy" id="67771"/>
    <lineage>
        <taxon>Eukaryota</taxon>
        <taxon>Metazoa</taxon>
        <taxon>Chordata</taxon>
        <taxon>Craniata</taxon>
        <taxon>Vertebrata</taxon>
        <taxon>Euteleostomi</taxon>
        <taxon>Archelosauria</taxon>
        <taxon>Archosauria</taxon>
        <taxon>Dinosauria</taxon>
        <taxon>Saurischia</taxon>
        <taxon>Theropoda</taxon>
        <taxon>Coelurosauria</taxon>
        <taxon>Aves</taxon>
        <taxon>Neognathae</taxon>
        <taxon>Galloanserae</taxon>
        <taxon>Galliformes</taxon>
        <taxon>Odontophoridae</taxon>
        <taxon>Callipepla</taxon>
    </lineage>
</organism>
<keyword id="KW-0929">Antimicrobial</keyword>
<keyword id="KW-0081">Bacteriolytic enzyme</keyword>
<keyword id="KW-0903">Direct protein sequencing</keyword>
<keyword id="KW-1015">Disulfide bond</keyword>
<keyword id="KW-0326">Glycosidase</keyword>
<keyword id="KW-0378">Hydrolase</keyword>
<keyword id="KW-0964">Secreted</keyword>
<protein>
    <recommendedName>
        <fullName>Lysozyme C</fullName>
        <ecNumber>3.2.1.17</ecNumber>
    </recommendedName>
    <alternativeName>
        <fullName>1,4-beta-N-acetylmuramidase C</fullName>
    </alternativeName>
</protein>
<gene>
    <name type="primary">LYZ</name>
</gene>
<accession>P00699</accession>
<proteinExistence type="evidence at protein level"/>
<sequence>KVFGRCELAAAMKRHGLDNYRGYSLGNWVCAAKFESNFNSQATNRNTDGSTDYGVLQINSRWWCNDGRTPGSRNLCNIPCSALLSSDITATVNCAKKIVSDGNGMNAWVAWRNRCKGTDVHAWIRGCRL</sequence>
<reference key="1">
    <citation type="journal article" date="1979" name="Biochemistry">
        <title>Amino acid sequence of California quail lysozyme. Effect of evolutionary substitutions on the antigenic structure of lysozyme.</title>
        <authorList>
            <person name="Ibrahimi I.M."/>
            <person name="Prager E.M."/>
            <person name="White T.J."/>
            <person name="Wilson A.C."/>
        </authorList>
    </citation>
    <scope>PROTEIN SEQUENCE</scope>
    <source>
        <tissue>Egg white</tissue>
    </source>
</reference>
<name>LYSC_CALCC</name>
<evidence type="ECO:0000255" key="1">
    <source>
        <dbReference type="PROSITE-ProRule" id="PRU00680"/>
    </source>
</evidence>